<gene>
    <name evidence="1" type="primary">mnmG</name>
    <name evidence="1" type="synonym">gidA</name>
    <name type="ordered locus">TDE_0828</name>
</gene>
<evidence type="ECO:0000255" key="1">
    <source>
        <dbReference type="HAMAP-Rule" id="MF_00129"/>
    </source>
</evidence>
<reference key="1">
    <citation type="journal article" date="2004" name="Proc. Natl. Acad. Sci. U.S.A.">
        <title>Comparison of the genome of the oral pathogen Treponema denticola with other spirochete genomes.</title>
        <authorList>
            <person name="Seshadri R."/>
            <person name="Myers G.S.A."/>
            <person name="Tettelin H."/>
            <person name="Eisen J.A."/>
            <person name="Heidelberg J.F."/>
            <person name="Dodson R.J."/>
            <person name="Davidsen T.M."/>
            <person name="DeBoy R.T."/>
            <person name="Fouts D.E."/>
            <person name="Haft D.H."/>
            <person name="Selengut J."/>
            <person name="Ren Q."/>
            <person name="Brinkac L.M."/>
            <person name="Madupu R."/>
            <person name="Kolonay J.F."/>
            <person name="Durkin S.A."/>
            <person name="Daugherty S.C."/>
            <person name="Shetty J."/>
            <person name="Shvartsbeyn A."/>
            <person name="Gebregeorgis E."/>
            <person name="Geer K."/>
            <person name="Tsegaye G."/>
            <person name="Malek J.A."/>
            <person name="Ayodeji B."/>
            <person name="Shatsman S."/>
            <person name="McLeod M.P."/>
            <person name="Smajs D."/>
            <person name="Howell J.K."/>
            <person name="Pal S."/>
            <person name="Amin A."/>
            <person name="Vashisth P."/>
            <person name="McNeill T.Z."/>
            <person name="Xiang Q."/>
            <person name="Sodergren E."/>
            <person name="Baca E."/>
            <person name="Weinstock G.M."/>
            <person name="Norris S.J."/>
            <person name="Fraser C.M."/>
            <person name="Paulsen I.T."/>
        </authorList>
    </citation>
    <scope>NUCLEOTIDE SEQUENCE [LARGE SCALE GENOMIC DNA]</scope>
    <source>
        <strain>ATCC 35405 / DSM 14222 / CIP 103919 / JCM 8153 / KCTC 15104</strain>
    </source>
</reference>
<feature type="chain" id="PRO_0000117205" description="tRNA uridine 5-carboxymethylaminomethyl modification enzyme MnmG">
    <location>
        <begin position="1"/>
        <end position="628"/>
    </location>
</feature>
<feature type="binding site" evidence="1">
    <location>
        <begin position="13"/>
        <end position="18"/>
    </location>
    <ligand>
        <name>FAD</name>
        <dbReference type="ChEBI" id="CHEBI:57692"/>
    </ligand>
</feature>
<feature type="binding site" evidence="1">
    <location>
        <begin position="281"/>
        <end position="295"/>
    </location>
    <ligand>
        <name>NAD(+)</name>
        <dbReference type="ChEBI" id="CHEBI:57540"/>
    </ligand>
</feature>
<organism>
    <name type="scientific">Treponema denticola (strain ATCC 35405 / DSM 14222 / CIP 103919 / JCM 8153 / KCTC 15104)</name>
    <dbReference type="NCBI Taxonomy" id="243275"/>
    <lineage>
        <taxon>Bacteria</taxon>
        <taxon>Pseudomonadati</taxon>
        <taxon>Spirochaetota</taxon>
        <taxon>Spirochaetia</taxon>
        <taxon>Spirochaetales</taxon>
        <taxon>Treponemataceae</taxon>
        <taxon>Treponema</taxon>
    </lineage>
</organism>
<accession>Q73PH1</accession>
<dbReference type="EMBL" id="AE017226">
    <property type="protein sequence ID" value="AAS11319.1"/>
    <property type="molecule type" value="Genomic_DNA"/>
</dbReference>
<dbReference type="RefSeq" id="NP_971438.1">
    <property type="nucleotide sequence ID" value="NC_002967.9"/>
</dbReference>
<dbReference type="RefSeq" id="WP_002682089.1">
    <property type="nucleotide sequence ID" value="NC_002967.9"/>
</dbReference>
<dbReference type="SMR" id="Q73PH1"/>
<dbReference type="STRING" id="243275.TDE_0828"/>
<dbReference type="PaxDb" id="243275-TDE_0828"/>
<dbReference type="GeneID" id="2739512"/>
<dbReference type="KEGG" id="tde:TDE_0828"/>
<dbReference type="PATRIC" id="fig|243275.7.peg.797"/>
<dbReference type="eggNOG" id="COG0445">
    <property type="taxonomic scope" value="Bacteria"/>
</dbReference>
<dbReference type="HOGENOM" id="CLU_007831_2_2_12"/>
<dbReference type="OrthoDB" id="9815560at2"/>
<dbReference type="Proteomes" id="UP000008212">
    <property type="component" value="Chromosome"/>
</dbReference>
<dbReference type="GO" id="GO:0005829">
    <property type="term" value="C:cytosol"/>
    <property type="evidence" value="ECO:0007669"/>
    <property type="project" value="TreeGrafter"/>
</dbReference>
<dbReference type="GO" id="GO:0050660">
    <property type="term" value="F:flavin adenine dinucleotide binding"/>
    <property type="evidence" value="ECO:0007669"/>
    <property type="project" value="UniProtKB-UniRule"/>
</dbReference>
<dbReference type="GO" id="GO:0030488">
    <property type="term" value="P:tRNA methylation"/>
    <property type="evidence" value="ECO:0007669"/>
    <property type="project" value="TreeGrafter"/>
</dbReference>
<dbReference type="GO" id="GO:0002098">
    <property type="term" value="P:tRNA wobble uridine modification"/>
    <property type="evidence" value="ECO:0007669"/>
    <property type="project" value="InterPro"/>
</dbReference>
<dbReference type="FunFam" id="1.10.150.570:FF:000001">
    <property type="entry name" value="tRNA uridine 5-carboxymethylaminomethyl modification enzyme MnmG"/>
    <property type="match status" value="1"/>
</dbReference>
<dbReference type="FunFam" id="3.50.50.60:FF:000002">
    <property type="entry name" value="tRNA uridine 5-carboxymethylaminomethyl modification enzyme MnmG"/>
    <property type="match status" value="1"/>
</dbReference>
<dbReference type="Gene3D" id="3.50.50.60">
    <property type="entry name" value="FAD/NAD(P)-binding domain"/>
    <property type="match status" value="2"/>
</dbReference>
<dbReference type="Gene3D" id="1.10.150.570">
    <property type="entry name" value="GidA associated domain, C-terminal subdomain"/>
    <property type="match status" value="1"/>
</dbReference>
<dbReference type="HAMAP" id="MF_00129">
    <property type="entry name" value="MnmG_GidA"/>
    <property type="match status" value="1"/>
</dbReference>
<dbReference type="InterPro" id="IPR036188">
    <property type="entry name" value="FAD/NAD-bd_sf"/>
</dbReference>
<dbReference type="InterPro" id="IPR049312">
    <property type="entry name" value="GIDA_C_N"/>
</dbReference>
<dbReference type="InterPro" id="IPR004416">
    <property type="entry name" value="MnmG"/>
</dbReference>
<dbReference type="InterPro" id="IPR002218">
    <property type="entry name" value="MnmG-rel"/>
</dbReference>
<dbReference type="InterPro" id="IPR020595">
    <property type="entry name" value="MnmG-rel_CS"/>
</dbReference>
<dbReference type="InterPro" id="IPR026904">
    <property type="entry name" value="MnmG_C"/>
</dbReference>
<dbReference type="InterPro" id="IPR047001">
    <property type="entry name" value="MnmG_C_subdom"/>
</dbReference>
<dbReference type="InterPro" id="IPR044920">
    <property type="entry name" value="MnmG_C_subdom_sf"/>
</dbReference>
<dbReference type="InterPro" id="IPR040131">
    <property type="entry name" value="MnmG_N"/>
</dbReference>
<dbReference type="NCBIfam" id="TIGR00136">
    <property type="entry name" value="mnmG_gidA"/>
    <property type="match status" value="1"/>
</dbReference>
<dbReference type="PANTHER" id="PTHR11806">
    <property type="entry name" value="GLUCOSE INHIBITED DIVISION PROTEIN A"/>
    <property type="match status" value="1"/>
</dbReference>
<dbReference type="PANTHER" id="PTHR11806:SF0">
    <property type="entry name" value="PROTEIN MTO1 HOMOLOG, MITOCHONDRIAL"/>
    <property type="match status" value="1"/>
</dbReference>
<dbReference type="Pfam" id="PF01134">
    <property type="entry name" value="GIDA"/>
    <property type="match status" value="1"/>
</dbReference>
<dbReference type="Pfam" id="PF21680">
    <property type="entry name" value="GIDA_C_1st"/>
    <property type="match status" value="1"/>
</dbReference>
<dbReference type="Pfam" id="PF13932">
    <property type="entry name" value="SAM_GIDA_C"/>
    <property type="match status" value="1"/>
</dbReference>
<dbReference type="PRINTS" id="PR00368">
    <property type="entry name" value="FADPNR"/>
</dbReference>
<dbReference type="PRINTS" id="PR00411">
    <property type="entry name" value="PNDRDTASEI"/>
</dbReference>
<dbReference type="SMART" id="SM01228">
    <property type="entry name" value="GIDA_assoc_3"/>
    <property type="match status" value="1"/>
</dbReference>
<dbReference type="SUPFAM" id="SSF51905">
    <property type="entry name" value="FAD/NAD(P)-binding domain"/>
    <property type="match status" value="1"/>
</dbReference>
<dbReference type="PROSITE" id="PS01280">
    <property type="entry name" value="GIDA_1"/>
    <property type="match status" value="1"/>
</dbReference>
<dbReference type="PROSITE" id="PS01281">
    <property type="entry name" value="GIDA_2"/>
    <property type="match status" value="1"/>
</dbReference>
<sequence>MYRFSDYDVIVVGAGHAGIEAALASARMGEAVLLITQTLDSAGRLSCNPSIGGISKGNIVREIDALGGEMGKLADASMIQYRLLNKSRGPAVQAPRVQADKFLYSQLAKHAIELEKNLHVFQDTVIDIVSSNTNESGYVEKGSVQYVKTERGREFSAKAVVLATGTFMEGKIYIGEYESPDGRLGERAAIGLGPALAKKGFTVGRLKTGTPMRILRRSFDSSLTEEQEADEIMRPFSFSNAEIHRPYAKCYITHTNQETHDIIRENLHRAALFSGKITGTGARYCPSIEDKIKKFPERDRHHVYIEPEGLNTEELYINGLSSSLPEDVQDRMIRTIPCFKDVIITRPAYAVDYAYVSPIQLSSDLQTRRIEGLFLAGQINGTSGYEEAGGQGIIAGINAALFSRSLKFKDEKYVPFVLKRDEAYIGVMIDDLVTQGVDEPYRMFTARAEYRLNLRHDTADERLTERAYQIGLQTKEASNRLKEKLLTREKIISLWKDIKITRDLIAKNPELKNHIGKSLADALHDPQVSLECICAIDENSKDYSAELLESAELEIRYEHYIAVQNRKIAKVKRMENTKIPADFDYDAVSGLSTESRTRLKEVRPETIGQASRIRGIRPSDIMLLSILL</sequence>
<name>MNMG_TREDE</name>
<protein>
    <recommendedName>
        <fullName evidence="1">tRNA uridine 5-carboxymethylaminomethyl modification enzyme MnmG</fullName>
    </recommendedName>
    <alternativeName>
        <fullName evidence="1">Glucose-inhibited division protein A</fullName>
    </alternativeName>
</protein>
<keyword id="KW-0963">Cytoplasm</keyword>
<keyword id="KW-0274">FAD</keyword>
<keyword id="KW-0285">Flavoprotein</keyword>
<keyword id="KW-0520">NAD</keyword>
<keyword id="KW-1185">Reference proteome</keyword>
<keyword id="KW-0819">tRNA processing</keyword>
<comment type="function">
    <text evidence="1">NAD-binding protein involved in the addition of a carboxymethylaminomethyl (cmnm) group at the wobble position (U34) of certain tRNAs, forming tRNA-cmnm(5)s(2)U34.</text>
</comment>
<comment type="cofactor">
    <cofactor evidence="1">
        <name>FAD</name>
        <dbReference type="ChEBI" id="CHEBI:57692"/>
    </cofactor>
</comment>
<comment type="subunit">
    <text evidence="1">Homodimer. Heterotetramer of two MnmE and two MnmG subunits.</text>
</comment>
<comment type="subcellular location">
    <subcellularLocation>
        <location evidence="1">Cytoplasm</location>
    </subcellularLocation>
</comment>
<comment type="similarity">
    <text evidence="1">Belongs to the MnmG family.</text>
</comment>
<proteinExistence type="inferred from homology"/>